<sequence length="360" mass="39753">MLVYLAEYLTRFYTGFNVFSYVTFRAILGLLTALIFSLWWGPKLIERLQLLQIGQVVRNDGPESHFSKRGTPTMGGLLILAAIFISVLLWGDLGSRYVWVMLFVLGSFGLIGFIDDYRKVVRKDTKGLIARWKYILQSLAALLIAFFLYATAANPGETQLVVPFFKDVMPQLGGVFIVLAYFTIVGSSNAVNLTDGLDGLAIMPTVMVAAAFALIAYLSGHVQFANYLHIPHLPGSGELVIVCTAIVGAGLGFLWFNTYPAQVFMGDVGSLSLGAALGAIAVLVRQEILLVIMGGVFVMETVSVILQVGSYKLRGQRIFRMAPIHHHYELKGWPEPRVIVRFWIISIFLVLLGLATLKLR</sequence>
<feature type="chain" id="PRO_1000003060" description="Phospho-N-acetylmuramoyl-pentapeptide-transferase">
    <location>
        <begin position="1"/>
        <end position="360"/>
    </location>
</feature>
<feature type="transmembrane region" description="Helical" evidence="1">
    <location>
        <begin position="26"/>
        <end position="46"/>
    </location>
</feature>
<feature type="transmembrane region" description="Helical" evidence="1">
    <location>
        <begin position="74"/>
        <end position="94"/>
    </location>
</feature>
<feature type="transmembrane region" description="Helical" evidence="1">
    <location>
        <begin position="97"/>
        <end position="117"/>
    </location>
</feature>
<feature type="transmembrane region" description="Helical" evidence="1">
    <location>
        <begin position="134"/>
        <end position="154"/>
    </location>
</feature>
<feature type="transmembrane region" description="Helical" evidence="1">
    <location>
        <begin position="168"/>
        <end position="188"/>
    </location>
</feature>
<feature type="transmembrane region" description="Helical" evidence="1">
    <location>
        <begin position="199"/>
        <end position="219"/>
    </location>
</feature>
<feature type="transmembrane region" description="Helical" evidence="1">
    <location>
        <begin position="236"/>
        <end position="256"/>
    </location>
</feature>
<feature type="transmembrane region" description="Helical" evidence="1">
    <location>
        <begin position="263"/>
        <end position="283"/>
    </location>
</feature>
<feature type="transmembrane region" description="Helical" evidence="1">
    <location>
        <begin position="288"/>
        <end position="308"/>
    </location>
</feature>
<feature type="transmembrane region" description="Helical" evidence="1">
    <location>
        <begin position="338"/>
        <end position="358"/>
    </location>
</feature>
<gene>
    <name evidence="1" type="primary">mraY</name>
    <name type="ordered locus">Sputcn32_0484</name>
</gene>
<name>MRAY_SHEPC</name>
<proteinExistence type="inferred from homology"/>
<protein>
    <recommendedName>
        <fullName evidence="1">Phospho-N-acetylmuramoyl-pentapeptide-transferase</fullName>
        <ecNumber evidence="1">2.7.8.13</ecNumber>
    </recommendedName>
    <alternativeName>
        <fullName evidence="1">UDP-MurNAc-pentapeptide phosphotransferase</fullName>
    </alternativeName>
</protein>
<evidence type="ECO:0000255" key="1">
    <source>
        <dbReference type="HAMAP-Rule" id="MF_00038"/>
    </source>
</evidence>
<dbReference type="EC" id="2.7.8.13" evidence="1"/>
<dbReference type="EMBL" id="CP000681">
    <property type="protein sequence ID" value="ABP74216.1"/>
    <property type="molecule type" value="Genomic_DNA"/>
</dbReference>
<dbReference type="SMR" id="A4Y2N3"/>
<dbReference type="STRING" id="319224.Sputcn32_0484"/>
<dbReference type="KEGG" id="spc:Sputcn32_0484"/>
<dbReference type="eggNOG" id="COG0472">
    <property type="taxonomic scope" value="Bacteria"/>
</dbReference>
<dbReference type="HOGENOM" id="CLU_023982_0_0_6"/>
<dbReference type="UniPathway" id="UPA00219"/>
<dbReference type="GO" id="GO:0005886">
    <property type="term" value="C:plasma membrane"/>
    <property type="evidence" value="ECO:0007669"/>
    <property type="project" value="UniProtKB-SubCell"/>
</dbReference>
<dbReference type="GO" id="GO:0046872">
    <property type="term" value="F:metal ion binding"/>
    <property type="evidence" value="ECO:0007669"/>
    <property type="project" value="UniProtKB-KW"/>
</dbReference>
<dbReference type="GO" id="GO:0008963">
    <property type="term" value="F:phospho-N-acetylmuramoyl-pentapeptide-transferase activity"/>
    <property type="evidence" value="ECO:0007669"/>
    <property type="project" value="UniProtKB-UniRule"/>
</dbReference>
<dbReference type="GO" id="GO:0051992">
    <property type="term" value="F:UDP-N-acetylmuramoyl-L-alanyl-D-glutamyl-meso-2,6-diaminopimelyl-D-alanyl-D-alanine:undecaprenyl-phosphate transferase activity"/>
    <property type="evidence" value="ECO:0007669"/>
    <property type="project" value="RHEA"/>
</dbReference>
<dbReference type="GO" id="GO:0051301">
    <property type="term" value="P:cell division"/>
    <property type="evidence" value="ECO:0007669"/>
    <property type="project" value="UniProtKB-KW"/>
</dbReference>
<dbReference type="GO" id="GO:0071555">
    <property type="term" value="P:cell wall organization"/>
    <property type="evidence" value="ECO:0007669"/>
    <property type="project" value="UniProtKB-KW"/>
</dbReference>
<dbReference type="GO" id="GO:0009252">
    <property type="term" value="P:peptidoglycan biosynthetic process"/>
    <property type="evidence" value="ECO:0007669"/>
    <property type="project" value="UniProtKB-UniRule"/>
</dbReference>
<dbReference type="GO" id="GO:0008360">
    <property type="term" value="P:regulation of cell shape"/>
    <property type="evidence" value="ECO:0007669"/>
    <property type="project" value="UniProtKB-KW"/>
</dbReference>
<dbReference type="CDD" id="cd06852">
    <property type="entry name" value="GT_MraY"/>
    <property type="match status" value="1"/>
</dbReference>
<dbReference type="HAMAP" id="MF_00038">
    <property type="entry name" value="MraY"/>
    <property type="match status" value="1"/>
</dbReference>
<dbReference type="InterPro" id="IPR000715">
    <property type="entry name" value="Glycosyl_transferase_4"/>
</dbReference>
<dbReference type="InterPro" id="IPR003524">
    <property type="entry name" value="PNAcMuramoyl-5peptid_Trfase"/>
</dbReference>
<dbReference type="InterPro" id="IPR018480">
    <property type="entry name" value="PNAcMuramoyl-5peptid_Trfase_CS"/>
</dbReference>
<dbReference type="NCBIfam" id="TIGR00445">
    <property type="entry name" value="mraY"/>
    <property type="match status" value="1"/>
</dbReference>
<dbReference type="PANTHER" id="PTHR22926">
    <property type="entry name" value="PHOSPHO-N-ACETYLMURAMOYL-PENTAPEPTIDE-TRANSFERASE"/>
    <property type="match status" value="1"/>
</dbReference>
<dbReference type="PANTHER" id="PTHR22926:SF5">
    <property type="entry name" value="PHOSPHO-N-ACETYLMURAMOYL-PENTAPEPTIDE-TRANSFERASE HOMOLOG"/>
    <property type="match status" value="1"/>
</dbReference>
<dbReference type="Pfam" id="PF00953">
    <property type="entry name" value="Glycos_transf_4"/>
    <property type="match status" value="1"/>
</dbReference>
<dbReference type="Pfam" id="PF10555">
    <property type="entry name" value="MraY_sig1"/>
    <property type="match status" value="1"/>
</dbReference>
<dbReference type="PROSITE" id="PS01347">
    <property type="entry name" value="MRAY_1"/>
    <property type="match status" value="1"/>
</dbReference>
<dbReference type="PROSITE" id="PS01348">
    <property type="entry name" value="MRAY_2"/>
    <property type="match status" value="1"/>
</dbReference>
<comment type="function">
    <text evidence="1">Catalyzes the initial step of the lipid cycle reactions in the biosynthesis of the cell wall peptidoglycan: transfers peptidoglycan precursor phospho-MurNAc-pentapeptide from UDP-MurNAc-pentapeptide onto the lipid carrier undecaprenyl phosphate, yielding undecaprenyl-pyrophosphoryl-MurNAc-pentapeptide, known as lipid I.</text>
</comment>
<comment type="catalytic activity">
    <reaction evidence="1">
        <text>UDP-N-acetyl-alpha-D-muramoyl-L-alanyl-gamma-D-glutamyl-meso-2,6-diaminopimeloyl-D-alanyl-D-alanine + di-trans,octa-cis-undecaprenyl phosphate = di-trans,octa-cis-undecaprenyl diphospho-N-acetyl-alpha-D-muramoyl-L-alanyl-D-glutamyl-meso-2,6-diaminopimeloyl-D-alanyl-D-alanine + UMP</text>
        <dbReference type="Rhea" id="RHEA:28386"/>
        <dbReference type="ChEBI" id="CHEBI:57865"/>
        <dbReference type="ChEBI" id="CHEBI:60392"/>
        <dbReference type="ChEBI" id="CHEBI:61386"/>
        <dbReference type="ChEBI" id="CHEBI:61387"/>
        <dbReference type="EC" id="2.7.8.13"/>
    </reaction>
</comment>
<comment type="cofactor">
    <cofactor evidence="1">
        <name>Mg(2+)</name>
        <dbReference type="ChEBI" id="CHEBI:18420"/>
    </cofactor>
</comment>
<comment type="pathway">
    <text evidence="1">Cell wall biogenesis; peptidoglycan biosynthesis.</text>
</comment>
<comment type="subcellular location">
    <subcellularLocation>
        <location evidence="1">Cell inner membrane</location>
        <topology evidence="1">Multi-pass membrane protein</topology>
    </subcellularLocation>
</comment>
<comment type="similarity">
    <text evidence="1">Belongs to the glycosyltransferase 4 family. MraY subfamily.</text>
</comment>
<keyword id="KW-0131">Cell cycle</keyword>
<keyword id="KW-0132">Cell division</keyword>
<keyword id="KW-0997">Cell inner membrane</keyword>
<keyword id="KW-1003">Cell membrane</keyword>
<keyword id="KW-0133">Cell shape</keyword>
<keyword id="KW-0961">Cell wall biogenesis/degradation</keyword>
<keyword id="KW-0460">Magnesium</keyword>
<keyword id="KW-0472">Membrane</keyword>
<keyword id="KW-0479">Metal-binding</keyword>
<keyword id="KW-0573">Peptidoglycan synthesis</keyword>
<keyword id="KW-0808">Transferase</keyword>
<keyword id="KW-0812">Transmembrane</keyword>
<keyword id="KW-1133">Transmembrane helix</keyword>
<reference key="1">
    <citation type="submission" date="2007-04" db="EMBL/GenBank/DDBJ databases">
        <title>Complete sequence of Shewanella putrefaciens CN-32.</title>
        <authorList>
            <consortium name="US DOE Joint Genome Institute"/>
            <person name="Copeland A."/>
            <person name="Lucas S."/>
            <person name="Lapidus A."/>
            <person name="Barry K."/>
            <person name="Detter J.C."/>
            <person name="Glavina del Rio T."/>
            <person name="Hammon N."/>
            <person name="Israni S."/>
            <person name="Dalin E."/>
            <person name="Tice H."/>
            <person name="Pitluck S."/>
            <person name="Chain P."/>
            <person name="Malfatti S."/>
            <person name="Shin M."/>
            <person name="Vergez L."/>
            <person name="Schmutz J."/>
            <person name="Larimer F."/>
            <person name="Land M."/>
            <person name="Hauser L."/>
            <person name="Kyrpides N."/>
            <person name="Mikhailova N."/>
            <person name="Romine M.F."/>
            <person name="Fredrickson J."/>
            <person name="Tiedje J."/>
            <person name="Richardson P."/>
        </authorList>
    </citation>
    <scope>NUCLEOTIDE SEQUENCE [LARGE SCALE GENOMIC DNA]</scope>
    <source>
        <strain>CN-32 / ATCC BAA-453</strain>
    </source>
</reference>
<accession>A4Y2N3</accession>
<organism>
    <name type="scientific">Shewanella putrefaciens (strain CN-32 / ATCC BAA-453)</name>
    <dbReference type="NCBI Taxonomy" id="319224"/>
    <lineage>
        <taxon>Bacteria</taxon>
        <taxon>Pseudomonadati</taxon>
        <taxon>Pseudomonadota</taxon>
        <taxon>Gammaproteobacteria</taxon>
        <taxon>Alteromonadales</taxon>
        <taxon>Shewanellaceae</taxon>
        <taxon>Shewanella</taxon>
    </lineage>
</organism>